<dbReference type="EC" id="2.8.1.12"/>
<dbReference type="EMBL" id="L42023">
    <property type="protein sequence ID" value="AAC23318.1"/>
    <property type="molecule type" value="Genomic_DNA"/>
</dbReference>
<dbReference type="PIR" id="H64135">
    <property type="entry name" value="H64135"/>
</dbReference>
<dbReference type="RefSeq" id="NP_439815.1">
    <property type="nucleotide sequence ID" value="NC_000907.1"/>
</dbReference>
<dbReference type="SMR" id="P45308"/>
<dbReference type="STRING" id="71421.HI_1673"/>
<dbReference type="EnsemblBacteria" id="AAC23318">
    <property type="protein sequence ID" value="AAC23318"/>
    <property type="gene ID" value="HI_1673"/>
</dbReference>
<dbReference type="KEGG" id="hin:HI_1673"/>
<dbReference type="PATRIC" id="fig|71421.8.peg.1752"/>
<dbReference type="eggNOG" id="COG0314">
    <property type="taxonomic scope" value="Bacteria"/>
</dbReference>
<dbReference type="HOGENOM" id="CLU_089568_2_1_6"/>
<dbReference type="OrthoDB" id="9803224at2"/>
<dbReference type="PhylomeDB" id="P45308"/>
<dbReference type="BioCyc" id="HINF71421:G1GJ1-1688-MONOMER"/>
<dbReference type="UniPathway" id="UPA00344"/>
<dbReference type="Proteomes" id="UP000000579">
    <property type="component" value="Chromosome"/>
</dbReference>
<dbReference type="GO" id="GO:0005829">
    <property type="term" value="C:cytosol"/>
    <property type="evidence" value="ECO:0000318"/>
    <property type="project" value="GO_Central"/>
</dbReference>
<dbReference type="GO" id="GO:0030366">
    <property type="term" value="F:molybdopterin synthase activity"/>
    <property type="evidence" value="ECO:0007669"/>
    <property type="project" value="UniProtKB-EC"/>
</dbReference>
<dbReference type="GO" id="GO:0006777">
    <property type="term" value="P:Mo-molybdopterin cofactor biosynthetic process"/>
    <property type="evidence" value="ECO:0007669"/>
    <property type="project" value="UniProtKB-KW"/>
</dbReference>
<dbReference type="CDD" id="cd00756">
    <property type="entry name" value="MoaE"/>
    <property type="match status" value="1"/>
</dbReference>
<dbReference type="FunFam" id="3.90.1170.40:FF:000001">
    <property type="entry name" value="Molybdopterin synthase catalytic subunit MoaE"/>
    <property type="match status" value="1"/>
</dbReference>
<dbReference type="Gene3D" id="3.90.1170.40">
    <property type="entry name" value="Molybdopterin biosynthesis MoaE subunit"/>
    <property type="match status" value="1"/>
</dbReference>
<dbReference type="InterPro" id="IPR036563">
    <property type="entry name" value="MoaE_sf"/>
</dbReference>
<dbReference type="InterPro" id="IPR003448">
    <property type="entry name" value="Mopterin_biosynth_MoaE"/>
</dbReference>
<dbReference type="NCBIfam" id="NF007959">
    <property type="entry name" value="PRK10678.1"/>
    <property type="match status" value="1"/>
</dbReference>
<dbReference type="PANTHER" id="PTHR23404">
    <property type="entry name" value="MOLYBDOPTERIN SYNTHASE RELATED"/>
    <property type="match status" value="1"/>
</dbReference>
<dbReference type="Pfam" id="PF02391">
    <property type="entry name" value="MoaE"/>
    <property type="match status" value="1"/>
</dbReference>
<dbReference type="SUPFAM" id="SSF54690">
    <property type="entry name" value="Molybdopterin synthase subunit MoaE"/>
    <property type="match status" value="1"/>
</dbReference>
<name>MOAE_HAEIN</name>
<gene>
    <name type="primary">moaE</name>
    <name type="ordered locus">HI_1673</name>
</gene>
<accession>P45308</accession>
<reference key="1">
    <citation type="journal article" date="1995" name="Science">
        <title>Whole-genome random sequencing and assembly of Haemophilus influenzae Rd.</title>
        <authorList>
            <person name="Fleischmann R.D."/>
            <person name="Adams M.D."/>
            <person name="White O."/>
            <person name="Clayton R.A."/>
            <person name="Kirkness E.F."/>
            <person name="Kerlavage A.R."/>
            <person name="Bult C.J."/>
            <person name="Tomb J.-F."/>
            <person name="Dougherty B.A."/>
            <person name="Merrick J.M."/>
            <person name="McKenney K."/>
            <person name="Sutton G.G."/>
            <person name="FitzHugh W."/>
            <person name="Fields C.A."/>
            <person name="Gocayne J.D."/>
            <person name="Scott J.D."/>
            <person name="Shirley R."/>
            <person name="Liu L.-I."/>
            <person name="Glodek A."/>
            <person name="Kelley J.M."/>
            <person name="Weidman J.F."/>
            <person name="Phillips C.A."/>
            <person name="Spriggs T."/>
            <person name="Hedblom E."/>
            <person name="Cotton M.D."/>
            <person name="Utterback T.R."/>
            <person name="Hanna M.C."/>
            <person name="Nguyen D.T."/>
            <person name="Saudek D.M."/>
            <person name="Brandon R.C."/>
            <person name="Fine L.D."/>
            <person name="Fritchman J.L."/>
            <person name="Fuhrmann J.L."/>
            <person name="Geoghagen N.S.M."/>
            <person name="Gnehm C.L."/>
            <person name="McDonald L.A."/>
            <person name="Small K.V."/>
            <person name="Fraser C.M."/>
            <person name="Smith H.O."/>
            <person name="Venter J.C."/>
        </authorList>
    </citation>
    <scope>NUCLEOTIDE SEQUENCE [LARGE SCALE GENOMIC DNA]</scope>
    <source>
        <strain>ATCC 51907 / DSM 11121 / KW20 / Rd</strain>
    </source>
</reference>
<comment type="function">
    <text evidence="1">Converts molybdopterin precursor Z into molybdopterin. This requires the incorporation of two sulfur atoms into precursor Z to generate a dithiolene group. The sulfur is provided by MoaD (By similarity).</text>
</comment>
<comment type="catalytic activity">
    <reaction>
        <text>2 [molybdopterin-synthase sulfur-carrier protein]-C-terminal-Gly-aminoethanethioate + cyclic pyranopterin phosphate + H2O = molybdopterin + 2 [molybdopterin-synthase sulfur-carrier protein]-C-terminal Gly-Gly + 2 H(+)</text>
        <dbReference type="Rhea" id="RHEA:26333"/>
        <dbReference type="Rhea" id="RHEA-COMP:12202"/>
        <dbReference type="Rhea" id="RHEA-COMP:19907"/>
        <dbReference type="ChEBI" id="CHEBI:15377"/>
        <dbReference type="ChEBI" id="CHEBI:15378"/>
        <dbReference type="ChEBI" id="CHEBI:58698"/>
        <dbReference type="ChEBI" id="CHEBI:59648"/>
        <dbReference type="ChEBI" id="CHEBI:90778"/>
        <dbReference type="ChEBI" id="CHEBI:232372"/>
        <dbReference type="EC" id="2.8.1.12"/>
    </reaction>
</comment>
<comment type="pathway">
    <text>Cofactor biosynthesis; molybdopterin biosynthesis.</text>
</comment>
<comment type="subunit">
    <text evidence="1">Heterotetramer of 2 MoaD subunits and 2 MoaE subunits. Also stable as homodimer. The enzyme changes between these two forms during catalysis (By similarity).</text>
</comment>
<comment type="similarity">
    <text evidence="2">Belongs to the MoaE family.</text>
</comment>
<sequence>MTDIQIAVQEQPFDQNAVYQWLSEQHSIGATVIFVGKVRDLNLGDEVSSLYLEHYPAMTEKALNEIVAQAKVRWDIQRVSVIHRVGLLQTGDEIVLVGVSSAHRGDAYHANEFIMDFLKSKAPFWKKEQTNQGERWIEARESDKEALEKW</sequence>
<evidence type="ECO:0000250" key="1"/>
<evidence type="ECO:0000305" key="2"/>
<feature type="chain" id="PRO_0000163084" description="Molybdopterin synthase catalytic subunit">
    <location>
        <begin position="1"/>
        <end position="150"/>
    </location>
</feature>
<feature type="binding site" evidence="1">
    <location>
        <begin position="37"/>
        <end position="39"/>
    </location>
    <ligand>
        <name>substrate</name>
    </ligand>
</feature>
<feature type="binding site" evidence="1">
    <location>
        <begin position="103"/>
        <end position="104"/>
    </location>
    <ligand>
        <name>substrate</name>
    </ligand>
</feature>
<feature type="binding site" evidence="1">
    <location>
        <position position="119"/>
    </location>
    <ligand>
        <name>substrate</name>
    </ligand>
</feature>
<feature type="binding site" evidence="1">
    <location>
        <begin position="126"/>
        <end position="128"/>
    </location>
    <ligand>
        <name>substrate</name>
    </ligand>
</feature>
<keyword id="KW-0501">Molybdenum cofactor biosynthesis</keyword>
<keyword id="KW-1185">Reference proteome</keyword>
<keyword id="KW-0808">Transferase</keyword>
<protein>
    <recommendedName>
        <fullName>Molybdopterin synthase catalytic subunit</fullName>
        <ecNumber>2.8.1.12</ecNumber>
    </recommendedName>
    <alternativeName>
        <fullName>MPT synthase subunit 2</fullName>
    </alternativeName>
    <alternativeName>
        <fullName>Molybdenum cofactor biosynthesis protein E</fullName>
    </alternativeName>
    <alternativeName>
        <fullName>Molybdopterin-converting factor large subunit</fullName>
    </alternativeName>
    <alternativeName>
        <fullName>Molybdopterin-converting factor subunit 2</fullName>
    </alternativeName>
</protein>
<organism>
    <name type="scientific">Haemophilus influenzae (strain ATCC 51907 / DSM 11121 / KW20 / Rd)</name>
    <dbReference type="NCBI Taxonomy" id="71421"/>
    <lineage>
        <taxon>Bacteria</taxon>
        <taxon>Pseudomonadati</taxon>
        <taxon>Pseudomonadota</taxon>
        <taxon>Gammaproteobacteria</taxon>
        <taxon>Pasteurellales</taxon>
        <taxon>Pasteurellaceae</taxon>
        <taxon>Haemophilus</taxon>
    </lineage>
</organism>
<proteinExistence type="inferred from homology"/>